<gene>
    <name type="primary">NCE103</name>
    <name type="synonym">NCE3</name>
    <name type="ordered locus">YNL036W</name>
    <name type="ORF">N2695</name>
</gene>
<proteinExistence type="evidence at protein level"/>
<name>CAN_YEAST</name>
<reference key="1">
    <citation type="journal article" date="1996" name="J. Cell Biol.">
        <title>A new pathway for protein export in Saccharomyces cerevisiae.</title>
        <authorList>
            <person name="Cleves A.E."/>
            <person name="Cooper D.N.W."/>
            <person name="Barondes S.H."/>
            <person name="Kelly R.B."/>
        </authorList>
    </citation>
    <scope>NUCLEOTIDE SEQUENCE [MRNA]</scope>
    <source>
        <strain>ATCC 26109 / X2180 / NCYC 826</strain>
    </source>
</reference>
<reference key="2">
    <citation type="journal article" date="1997" name="Nature">
        <title>The nucleotide sequence of Saccharomyces cerevisiae chromosome XIV and its evolutionary implications.</title>
        <authorList>
            <person name="Philippsen P."/>
            <person name="Kleine K."/>
            <person name="Poehlmann R."/>
            <person name="Duesterhoeft A."/>
            <person name="Hamberg K."/>
            <person name="Hegemann J.H."/>
            <person name="Obermaier B."/>
            <person name="Urrestarazu L.A."/>
            <person name="Aert R."/>
            <person name="Albermann K."/>
            <person name="Altmann R."/>
            <person name="Andre B."/>
            <person name="Baladron V."/>
            <person name="Ballesta J.P.G."/>
            <person name="Becam A.-M."/>
            <person name="Beinhauer J.D."/>
            <person name="Boskovic J."/>
            <person name="Buitrago M.J."/>
            <person name="Bussereau F."/>
            <person name="Coster F."/>
            <person name="Crouzet M."/>
            <person name="D'Angelo M."/>
            <person name="Dal Pero F."/>
            <person name="De Antoni A."/>
            <person name="del Rey F."/>
            <person name="Doignon F."/>
            <person name="Domdey H."/>
            <person name="Dubois E."/>
            <person name="Fiedler T.A."/>
            <person name="Fleig U."/>
            <person name="Floeth M."/>
            <person name="Fritz C."/>
            <person name="Gaillardin C."/>
            <person name="Garcia-Cantalejo J.M."/>
            <person name="Glansdorff N."/>
            <person name="Goffeau A."/>
            <person name="Gueldener U."/>
            <person name="Herbert C.J."/>
            <person name="Heumann K."/>
            <person name="Heuss-Neitzel D."/>
            <person name="Hilbert H."/>
            <person name="Hinni K."/>
            <person name="Iraqui Houssaini I."/>
            <person name="Jacquet M."/>
            <person name="Jimenez A."/>
            <person name="Jonniaux J.-L."/>
            <person name="Karpfinger-Hartl L."/>
            <person name="Lanfranchi G."/>
            <person name="Lepingle A."/>
            <person name="Levesque H."/>
            <person name="Lyck R."/>
            <person name="Maftahi M."/>
            <person name="Mallet L."/>
            <person name="Maurer C.T.C."/>
            <person name="Messenguy F."/>
            <person name="Mewes H.-W."/>
            <person name="Moestl D."/>
            <person name="Nasr F."/>
            <person name="Nicaud J.-M."/>
            <person name="Niedenthal R.K."/>
            <person name="Pandolfo D."/>
            <person name="Pierard A."/>
            <person name="Piravandi E."/>
            <person name="Planta R.J."/>
            <person name="Pohl T.M."/>
            <person name="Purnelle B."/>
            <person name="Rebischung C."/>
            <person name="Remacha M.A."/>
            <person name="Revuelta J.L."/>
            <person name="Rinke M."/>
            <person name="Saiz J.E."/>
            <person name="Sartorello F."/>
            <person name="Scherens B."/>
            <person name="Sen-Gupta M."/>
            <person name="Soler-Mira A."/>
            <person name="Urbanus J.H.M."/>
            <person name="Valle G."/>
            <person name="Van Dyck L."/>
            <person name="Verhasselt P."/>
            <person name="Vierendeels F."/>
            <person name="Vissers S."/>
            <person name="Voet M."/>
            <person name="Volckaert G."/>
            <person name="Wach A."/>
            <person name="Wambutt R."/>
            <person name="Wedler H."/>
            <person name="Zollner A."/>
            <person name="Hani J."/>
        </authorList>
    </citation>
    <scope>NUCLEOTIDE SEQUENCE [LARGE SCALE GENOMIC DNA]</scope>
    <source>
        <strain>ATCC 204508 / S288c</strain>
    </source>
</reference>
<reference key="3">
    <citation type="journal article" date="2014" name="G3 (Bethesda)">
        <title>The reference genome sequence of Saccharomyces cerevisiae: Then and now.</title>
        <authorList>
            <person name="Engel S.R."/>
            <person name="Dietrich F.S."/>
            <person name="Fisk D.G."/>
            <person name="Binkley G."/>
            <person name="Balakrishnan R."/>
            <person name="Costanzo M.C."/>
            <person name="Dwight S.S."/>
            <person name="Hitz B.C."/>
            <person name="Karra K."/>
            <person name="Nash R.S."/>
            <person name="Weng S."/>
            <person name="Wong E.D."/>
            <person name="Lloyd P."/>
            <person name="Skrzypek M.S."/>
            <person name="Miyasato S.R."/>
            <person name="Simison M."/>
            <person name="Cherry J.M."/>
        </authorList>
    </citation>
    <scope>GENOME REANNOTATION</scope>
    <source>
        <strain>ATCC 204508 / S288c</strain>
    </source>
</reference>
<reference key="4">
    <citation type="journal article" date="1999" name="Yeast">
        <title>Deletion of the carbonic anhydrase-like gene NCE103 of the yeast Saccharomyces cerevisiae causes an oxygen-sensitive growth defect.</title>
        <authorList>
            <person name="Goetz R."/>
            <person name="Gnann A."/>
            <person name="Zimmermann F.K."/>
        </authorList>
    </citation>
    <scope>FUNCTION</scope>
</reference>
<reference key="5">
    <citation type="journal article" date="2003" name="Nature">
        <title>Global analysis of protein localization in budding yeast.</title>
        <authorList>
            <person name="Huh W.-K."/>
            <person name="Falvo J.V."/>
            <person name="Gerke L.C."/>
            <person name="Carroll A.S."/>
            <person name="Howson R.W."/>
            <person name="Weissman J.S."/>
            <person name="O'Shea E.K."/>
        </authorList>
    </citation>
    <scope>SUBCELLULAR LOCATION [LARGE SCALE ANALYSIS]</scope>
</reference>
<reference key="6">
    <citation type="journal article" date="2003" name="Nature">
        <title>Global analysis of protein expression in yeast.</title>
        <authorList>
            <person name="Ghaemmaghami S."/>
            <person name="Huh W.-K."/>
            <person name="Bower K."/>
            <person name="Howson R.W."/>
            <person name="Belle A."/>
            <person name="Dephoure N."/>
            <person name="O'Shea E.K."/>
            <person name="Weissman J.S."/>
        </authorList>
    </citation>
    <scope>LEVEL OF PROTEIN EXPRESSION [LARGE SCALE ANALYSIS]</scope>
</reference>
<reference key="7">
    <citation type="journal article" date="2004" name="Biochem. J.">
        <title>Complementation of the yeast deletion mutant DeltaNCE103 by members of the beta class of carbonic anhydrases is dependent on carbonic anhydrase activity rather than on antioxidant activity.</title>
        <authorList>
            <person name="Clark D."/>
            <person name="Rowlett R.S."/>
            <person name="Coleman J.R."/>
            <person name="Klessig D.F."/>
        </authorList>
    </citation>
    <scope>FUNCTION</scope>
</reference>
<reference key="8">
    <citation type="journal article" date="2005" name="Biochem. J.">
        <title>Carbonic anhydrase (Nce103p): an essential biosynthetic enzyme for growth of Saccharomyces cerevisiae at atmospheric carbon dioxide pressure.</title>
        <authorList>
            <person name="Aguilera J."/>
            <person name="Van Dijken J.P."/>
            <person name="De Winde J.H."/>
            <person name="Pronk J.T."/>
        </authorList>
    </citation>
    <scope>FUNCTION</scope>
</reference>
<reference key="9">
    <citation type="journal article" date="2005" name="FEMS Yeast Res.">
        <title>Physiological and genome-wide transcriptional responses of Saccharomyces cerevisiae to high carbon dioxide concentrations.</title>
        <authorList>
            <person name="Aguilera J."/>
            <person name="Petit T."/>
            <person name="de Winde J.H."/>
            <person name="Pronk J.T."/>
        </authorList>
    </citation>
    <scope>INDUCTION</scope>
</reference>
<reference key="10">
    <citation type="journal article" date="2005" name="Mol. Microbiol.">
        <title>The gene NCE103 (YNL036w) from Saccharomyces cerevisiae encodes a functional carbonic anhydrase and its transcription is regulated by the concentration of inorganic carbon in the medium.</title>
        <authorList>
            <person name="Amoroso G."/>
            <person name="Morell-Avrahov L."/>
            <person name="Mueller D."/>
            <person name="Klug K."/>
            <person name="Sueltemeyer D."/>
        </authorList>
    </citation>
    <scope>FUNCTION</scope>
    <scope>CATALYTIC ACTIVITY</scope>
    <scope>INDUCTION</scope>
</reference>
<reference key="11">
    <citation type="journal article" date="2008" name="Bioorg. Med. Chem. Lett.">
        <title>Carbonic anhydrase inhibitors. Inhibition of the beta-class enzyme from the yeast Saccharomyces cerevisiae with anions.</title>
        <authorList>
            <person name="Isik S."/>
            <person name="Kockar F."/>
            <person name="Arslan O."/>
            <person name="Guler O.O."/>
            <person name="Innocenti A."/>
            <person name="Supuran C.T."/>
        </authorList>
    </citation>
    <scope>FUNCTION</scope>
    <scope>CATALYTIC ACTIVITY</scope>
    <scope>BIOPHYSICOCHEMICAL PROPERTIES</scope>
</reference>
<reference key="12">
    <citation type="journal article" date="2012" name="Mol. Cell. Proteomics">
        <title>Intermembrane space proteome of yeast mitochondria.</title>
        <authorList>
            <person name="Voegtle F.N."/>
            <person name="Burkhart J.M."/>
            <person name="Rao S."/>
            <person name="Gerbeth C."/>
            <person name="Hinrichs J."/>
            <person name="Martinou J.C."/>
            <person name="Chacinska A."/>
            <person name="Sickmann A."/>
            <person name="Zahedi R.P."/>
            <person name="Meisinger C."/>
        </authorList>
    </citation>
    <scope>IDENTIFICATION BY MASS SPECTROMETRY</scope>
    <scope>SUBCELLULAR LOCATION [LARGE SCALE ANALYSIS]</scope>
</reference>
<reference key="13">
    <citation type="journal article" date="2009" name="BMC Struct. Biol.">
        <title>Structural insights into the substrate tunnel of Saccharomyces cerevisiae carbonic anhydrase Nce103.</title>
        <authorList>
            <person name="Teng Y.B."/>
            <person name="Jiang Y.L."/>
            <person name="He Y.X."/>
            <person name="He W.W."/>
            <person name="Lian F.M."/>
            <person name="Chen Y."/>
            <person name="Zhou C.Z."/>
        </authorList>
    </citation>
    <scope>X-RAY CRYSTALLOGRAPHY (2.04 ANGSTROMS) OF 14-221 IN COMPLEX WITH ZINC ION</scope>
    <scope>COFACTOR</scope>
</reference>
<comment type="function">
    <text evidence="2 5 7 8 9">Catalyzes the reversible hydration of CO(2) to H(2)CO(3). The main role may be to provide inorganic carbon for the bicarbonate-dependent carboxylation reactions catalyzed by pyruvate carboxylase, acetyl-CoA carboxylase and carbamoyl-phosphate synthetase. Involved in protection against oxidative damage. Encodes a substrate for the non-classical protein export pathway for proteins that lack a cleavable signal sequence.</text>
</comment>
<comment type="catalytic activity">
    <reaction evidence="7 9">
        <text>hydrogencarbonate + H(+) = CO2 + H2O</text>
        <dbReference type="Rhea" id="RHEA:10748"/>
        <dbReference type="ChEBI" id="CHEBI:15377"/>
        <dbReference type="ChEBI" id="CHEBI:15378"/>
        <dbReference type="ChEBI" id="CHEBI:16526"/>
        <dbReference type="ChEBI" id="CHEBI:17544"/>
        <dbReference type="EC" id="4.2.1.1"/>
    </reaction>
</comment>
<comment type="cofactor">
    <cofactor evidence="10">
        <name>Zn(2+)</name>
        <dbReference type="ChEBI" id="CHEBI:29105"/>
    </cofactor>
    <text evidence="10">Binds 1 zinc ion per subunit.</text>
</comment>
<comment type="biophysicochemical properties">
    <kinetics>
        <text evidence="9">kcat is 940000 sec(-1) with CO(2) as substrate.</text>
    </kinetics>
</comment>
<comment type="subcellular location">
    <subcellularLocation>
        <location evidence="3">Cytoplasm</location>
    </subcellularLocation>
    <subcellularLocation>
        <location evidence="3">Nucleus</location>
    </subcellularLocation>
    <subcellularLocation>
        <location evidence="11">Mitochondrion intermembrane space</location>
    </subcellularLocation>
</comment>
<comment type="induction">
    <text evidence="6 7">Transcription and activity down-regulated at elevated CO(2) concentrations.</text>
</comment>
<comment type="miscellaneous">
    <text evidence="4">Present with 2330 molecules/cell in log phase SD medium.</text>
</comment>
<comment type="similarity">
    <text evidence="12">Belongs to the beta-class carbonic anhydrase family.</text>
</comment>
<feature type="chain" id="PRO_0000077468" description="Carbonic anhydrase">
    <location>
        <begin position="1"/>
        <end position="221"/>
    </location>
</feature>
<feature type="binding site" evidence="10 13">
    <location>
        <position position="57"/>
    </location>
    <ligand>
        <name>Zn(2+)</name>
        <dbReference type="ChEBI" id="CHEBI:29105"/>
    </ligand>
</feature>
<feature type="binding site" evidence="1">
    <location>
        <position position="59"/>
    </location>
    <ligand>
        <name>Zn(2+)</name>
        <dbReference type="ChEBI" id="CHEBI:29105"/>
    </ligand>
</feature>
<feature type="binding site" evidence="10 13">
    <location>
        <position position="112"/>
    </location>
    <ligand>
        <name>Zn(2+)</name>
        <dbReference type="ChEBI" id="CHEBI:29105"/>
    </ligand>
</feature>
<feature type="binding site" evidence="10 13">
    <location>
        <position position="115"/>
    </location>
    <ligand>
        <name>Zn(2+)</name>
        <dbReference type="ChEBI" id="CHEBI:29105"/>
    </ligand>
</feature>
<feature type="sequence conflict" description="In Ref. 1; AAC49352." evidence="12" ref="1">
    <original>L</original>
    <variation>W</variation>
    <location>
        <position position="39"/>
    </location>
</feature>
<feature type="helix" evidence="14">
    <location>
        <begin position="18"/>
        <end position="35"/>
    </location>
</feature>
<feature type="helix" evidence="14">
    <location>
        <begin position="37"/>
        <end position="39"/>
    </location>
</feature>
<feature type="strand" evidence="14">
    <location>
        <begin position="51"/>
        <end position="57"/>
    </location>
</feature>
<feature type="helix" evidence="14">
    <location>
        <begin position="64"/>
        <end position="67"/>
    </location>
</feature>
<feature type="strand" evidence="14">
    <location>
        <begin position="73"/>
        <end position="79"/>
    </location>
</feature>
<feature type="helix" evidence="14">
    <location>
        <begin position="80"/>
        <end position="82"/>
    </location>
</feature>
<feature type="helix" evidence="14">
    <location>
        <begin position="89"/>
        <end position="100"/>
    </location>
</feature>
<feature type="strand" evidence="14">
    <location>
        <begin position="105"/>
        <end position="114"/>
    </location>
</feature>
<feature type="helix" evidence="14">
    <location>
        <begin position="116"/>
        <end position="122"/>
    </location>
</feature>
<feature type="helix" evidence="14">
    <location>
        <begin position="126"/>
        <end position="128"/>
    </location>
</feature>
<feature type="helix" evidence="14">
    <location>
        <begin position="130"/>
        <end position="132"/>
    </location>
</feature>
<feature type="helix" evidence="14">
    <location>
        <begin position="135"/>
        <end position="140"/>
    </location>
</feature>
<feature type="helix" evidence="14">
    <location>
        <begin position="142"/>
        <end position="150"/>
    </location>
</feature>
<feature type="helix" evidence="14">
    <location>
        <begin position="152"/>
        <end position="155"/>
    </location>
</feature>
<feature type="helix" evidence="14">
    <location>
        <begin position="161"/>
        <end position="180"/>
    </location>
</feature>
<feature type="helix" evidence="14">
    <location>
        <begin position="184"/>
        <end position="191"/>
    </location>
</feature>
<feature type="strand" evidence="14">
    <location>
        <begin position="196"/>
        <end position="202"/>
    </location>
</feature>
<feature type="turn" evidence="14">
    <location>
        <begin position="204"/>
        <end position="206"/>
    </location>
</feature>
<feature type="strand" evidence="14">
    <location>
        <begin position="209"/>
        <end position="215"/>
    </location>
</feature>
<feature type="strand" evidence="14">
    <location>
        <begin position="217"/>
        <end position="219"/>
    </location>
</feature>
<organism>
    <name type="scientific">Saccharomyces cerevisiae (strain ATCC 204508 / S288c)</name>
    <name type="common">Baker's yeast</name>
    <dbReference type="NCBI Taxonomy" id="559292"/>
    <lineage>
        <taxon>Eukaryota</taxon>
        <taxon>Fungi</taxon>
        <taxon>Dikarya</taxon>
        <taxon>Ascomycota</taxon>
        <taxon>Saccharomycotina</taxon>
        <taxon>Saccharomycetes</taxon>
        <taxon>Saccharomycetales</taxon>
        <taxon>Saccharomycetaceae</taxon>
        <taxon>Saccharomyces</taxon>
    </lineage>
</organism>
<accession>P53615</accession>
<accession>D6W1E3</accession>
<protein>
    <recommendedName>
        <fullName>Carbonic anhydrase</fullName>
        <ecNumber>4.2.1.1</ecNumber>
    </recommendedName>
    <alternativeName>
        <fullName>Carbonate dehydratase</fullName>
    </alternativeName>
    <alternativeName>
        <fullName>Non-classical export protein 3</fullName>
    </alternativeName>
</protein>
<dbReference type="EC" id="4.2.1.1"/>
<dbReference type="EMBL" id="U52369">
    <property type="protein sequence ID" value="AAC49352.1"/>
    <property type="molecule type" value="mRNA"/>
</dbReference>
<dbReference type="EMBL" id="Z71312">
    <property type="protein sequence ID" value="CAA95901.1"/>
    <property type="molecule type" value="Genomic_DNA"/>
</dbReference>
<dbReference type="EMBL" id="BK006947">
    <property type="protein sequence ID" value="DAA10509.1"/>
    <property type="molecule type" value="Genomic_DNA"/>
</dbReference>
<dbReference type="PIR" id="S62958">
    <property type="entry name" value="S62958"/>
</dbReference>
<dbReference type="RefSeq" id="NP_014362.3">
    <property type="nucleotide sequence ID" value="NM_001182875.3"/>
</dbReference>
<dbReference type="PDB" id="3EYX">
    <property type="method" value="X-ray"/>
    <property type="resolution" value="2.04 A"/>
    <property type="chains" value="A/B=14-221"/>
</dbReference>
<dbReference type="PDBsum" id="3EYX"/>
<dbReference type="SMR" id="P53615"/>
<dbReference type="BioGRID" id="35788">
    <property type="interactions" value="77"/>
</dbReference>
<dbReference type="DIP" id="DIP-968N"/>
<dbReference type="FunCoup" id="P53615">
    <property type="interactions" value="171"/>
</dbReference>
<dbReference type="IntAct" id="P53615">
    <property type="interactions" value="2"/>
</dbReference>
<dbReference type="MINT" id="P53615"/>
<dbReference type="STRING" id="4932.YNL036W"/>
<dbReference type="BindingDB" id="P53615"/>
<dbReference type="ChEMBL" id="CHEMBL5931"/>
<dbReference type="DrugCentral" id="P53615"/>
<dbReference type="iPTMnet" id="P53615"/>
<dbReference type="PaxDb" id="4932-YNL036W"/>
<dbReference type="PeptideAtlas" id="P53615"/>
<dbReference type="EnsemblFungi" id="YNL036W_mRNA">
    <property type="protein sequence ID" value="YNL036W"/>
    <property type="gene ID" value="YNL036W"/>
</dbReference>
<dbReference type="GeneID" id="855692"/>
<dbReference type="KEGG" id="sce:YNL036W"/>
<dbReference type="AGR" id="SGD:S000004981"/>
<dbReference type="SGD" id="S000004981">
    <property type="gene designation" value="NCE103"/>
</dbReference>
<dbReference type="VEuPathDB" id="FungiDB:YNL036W"/>
<dbReference type="eggNOG" id="KOG1578">
    <property type="taxonomic scope" value="Eukaryota"/>
</dbReference>
<dbReference type="GeneTree" id="ENSGT00500000045239"/>
<dbReference type="HOGENOM" id="CLU_053879_3_1_1"/>
<dbReference type="InParanoid" id="P53615"/>
<dbReference type="OMA" id="CGGIWAS"/>
<dbReference type="OrthoDB" id="10248475at2759"/>
<dbReference type="BioCyc" id="YEAST:G3O-33073-MONOMER"/>
<dbReference type="BRENDA" id="4.2.1.1">
    <property type="organism ID" value="984"/>
</dbReference>
<dbReference type="BioGRID-ORCS" id="855692">
    <property type="hits" value="7 hits in 10 CRISPR screens"/>
</dbReference>
<dbReference type="EvolutionaryTrace" id="P53615"/>
<dbReference type="PRO" id="PR:P53615"/>
<dbReference type="Proteomes" id="UP000002311">
    <property type="component" value="Chromosome XIV"/>
</dbReference>
<dbReference type="RNAct" id="P53615">
    <property type="molecule type" value="protein"/>
</dbReference>
<dbReference type="GO" id="GO:0005737">
    <property type="term" value="C:cytoplasm"/>
    <property type="evidence" value="ECO:0007005"/>
    <property type="project" value="SGD"/>
</dbReference>
<dbReference type="GO" id="GO:0005758">
    <property type="term" value="C:mitochondrial intermembrane space"/>
    <property type="evidence" value="ECO:0000314"/>
    <property type="project" value="SGD"/>
</dbReference>
<dbReference type="GO" id="GO:0005634">
    <property type="term" value="C:nucleus"/>
    <property type="evidence" value="ECO:0007005"/>
    <property type="project" value="SGD"/>
</dbReference>
<dbReference type="GO" id="GO:0004089">
    <property type="term" value="F:carbonate dehydratase activity"/>
    <property type="evidence" value="ECO:0000314"/>
    <property type="project" value="SGD"/>
</dbReference>
<dbReference type="GO" id="GO:0008270">
    <property type="term" value="F:zinc ion binding"/>
    <property type="evidence" value="ECO:0007669"/>
    <property type="project" value="InterPro"/>
</dbReference>
<dbReference type="GO" id="GO:0015976">
    <property type="term" value="P:carbon utilization"/>
    <property type="evidence" value="ECO:0007669"/>
    <property type="project" value="InterPro"/>
</dbReference>
<dbReference type="GO" id="GO:0071244">
    <property type="term" value="P:cellular response to carbon dioxide"/>
    <property type="evidence" value="ECO:0000315"/>
    <property type="project" value="SGD"/>
</dbReference>
<dbReference type="GO" id="GO:0034599">
    <property type="term" value="P:cellular response to oxidative stress"/>
    <property type="evidence" value="ECO:0000315"/>
    <property type="project" value="SGD"/>
</dbReference>
<dbReference type="CDD" id="cd00883">
    <property type="entry name" value="beta_CA_cladeA"/>
    <property type="match status" value="1"/>
</dbReference>
<dbReference type="FunFam" id="3.40.1050.10:FF:000010">
    <property type="entry name" value="Carbonic anhydrase"/>
    <property type="match status" value="1"/>
</dbReference>
<dbReference type="Gene3D" id="3.40.1050.10">
    <property type="entry name" value="Carbonic anhydrase"/>
    <property type="match status" value="1"/>
</dbReference>
<dbReference type="InterPro" id="IPR001765">
    <property type="entry name" value="Carbonic_anhydrase"/>
</dbReference>
<dbReference type="InterPro" id="IPR015892">
    <property type="entry name" value="Carbonic_anhydrase_CS"/>
</dbReference>
<dbReference type="InterPro" id="IPR036874">
    <property type="entry name" value="Carbonic_anhydrase_sf"/>
</dbReference>
<dbReference type="PANTHER" id="PTHR11002">
    <property type="entry name" value="CARBONIC ANHYDRASE"/>
    <property type="match status" value="1"/>
</dbReference>
<dbReference type="PANTHER" id="PTHR11002:SF76">
    <property type="entry name" value="CARBONIC ANHYDRASE"/>
    <property type="match status" value="1"/>
</dbReference>
<dbReference type="Pfam" id="PF00484">
    <property type="entry name" value="Pro_CA"/>
    <property type="match status" value="1"/>
</dbReference>
<dbReference type="SMART" id="SM00947">
    <property type="entry name" value="Pro_CA"/>
    <property type="match status" value="1"/>
</dbReference>
<dbReference type="SUPFAM" id="SSF53056">
    <property type="entry name" value="beta-carbonic anhydrase, cab"/>
    <property type="match status" value="1"/>
</dbReference>
<dbReference type="PROSITE" id="PS00705">
    <property type="entry name" value="PROK_CO2_ANHYDRASE_2"/>
    <property type="match status" value="1"/>
</dbReference>
<keyword id="KW-0002">3D-structure</keyword>
<keyword id="KW-0963">Cytoplasm</keyword>
<keyword id="KW-0456">Lyase</keyword>
<keyword id="KW-0479">Metal-binding</keyword>
<keyword id="KW-0496">Mitochondrion</keyword>
<keyword id="KW-0539">Nucleus</keyword>
<keyword id="KW-1185">Reference proteome</keyword>
<keyword id="KW-0862">Zinc</keyword>
<sequence length="221" mass="24859">MSATESSSIFTLSHNSNLQDILAANAKWASQMNNIQPTLFPDHNAKGQSPHTLFIGCSDSRYNENCLGVLPGEVFTWKNVANICHSEDLTLKATLEFAIICLKVNKVIICGHTDCGGIKTCLTNQREALPKVNCSHLYKYLDDIDTMYHEESQNLIHLKTQREKSHYLSHCNVKRQFNRIIENPTVQTAVQNGELQVYGLLYNVEDGLLQTVSTYTKVTPK</sequence>
<evidence type="ECO:0000250" key="1">
    <source>
        <dbReference type="UniProtKB" id="P61517"/>
    </source>
</evidence>
<evidence type="ECO:0000269" key="2">
    <source>
    </source>
</evidence>
<evidence type="ECO:0000269" key="3">
    <source>
    </source>
</evidence>
<evidence type="ECO:0000269" key="4">
    <source>
    </source>
</evidence>
<evidence type="ECO:0000269" key="5">
    <source>
    </source>
</evidence>
<evidence type="ECO:0000269" key="6">
    <source>
    </source>
</evidence>
<evidence type="ECO:0000269" key="7">
    <source>
    </source>
</evidence>
<evidence type="ECO:0000269" key="8">
    <source>
    </source>
</evidence>
<evidence type="ECO:0000269" key="9">
    <source>
    </source>
</evidence>
<evidence type="ECO:0000269" key="10">
    <source>
    </source>
</evidence>
<evidence type="ECO:0000269" key="11">
    <source>
    </source>
</evidence>
<evidence type="ECO:0000305" key="12"/>
<evidence type="ECO:0007744" key="13">
    <source>
        <dbReference type="PDB" id="3EYX"/>
    </source>
</evidence>
<evidence type="ECO:0007829" key="14">
    <source>
        <dbReference type="PDB" id="3EYX"/>
    </source>
</evidence>